<name>HOGA1_BOVIN</name>
<feature type="transit peptide" description="Mitochondrion" evidence="3">
    <location>
        <begin position="1"/>
        <end position="25"/>
    </location>
</feature>
<feature type="chain" id="PRO_0000273345" description="4-hydroxy-2-oxoglutarate aldolase, mitochondrial">
    <location>
        <begin position="26"/>
        <end position="327"/>
    </location>
</feature>
<feature type="active site" description="Schiff-base intermediate with substrate" evidence="1">
    <location>
        <position position="196"/>
    </location>
</feature>
<feature type="binding site" evidence="1">
    <location>
        <begin position="77"/>
        <end position="78"/>
    </location>
    <ligand>
        <name>substrate</name>
    </ligand>
</feature>
<feature type="binding site" evidence="1">
    <location>
        <position position="198"/>
    </location>
    <ligand>
        <name>substrate</name>
    </ligand>
</feature>
<feature type="binding site" evidence="1">
    <location>
        <position position="222"/>
    </location>
    <ligand>
        <name>substrate</name>
    </ligand>
</feature>
<feature type="site" description="Involved in proton transfer during cleavage" evidence="1">
    <location>
        <position position="168"/>
    </location>
</feature>
<feature type="sequence conflict" description="In Ref. 1; ABH06334." evidence="4" ref="1">
    <original>L</original>
    <variation>F</variation>
    <location>
        <position position="327"/>
    </location>
</feature>
<organism>
    <name type="scientific">Bos taurus</name>
    <name type="common">Bovine</name>
    <dbReference type="NCBI Taxonomy" id="9913"/>
    <lineage>
        <taxon>Eukaryota</taxon>
        <taxon>Metazoa</taxon>
        <taxon>Chordata</taxon>
        <taxon>Craniata</taxon>
        <taxon>Vertebrata</taxon>
        <taxon>Euteleostomi</taxon>
        <taxon>Mammalia</taxon>
        <taxon>Eutheria</taxon>
        <taxon>Laurasiatheria</taxon>
        <taxon>Artiodactyla</taxon>
        <taxon>Ruminantia</taxon>
        <taxon>Pecora</taxon>
        <taxon>Bovidae</taxon>
        <taxon>Bovinae</taxon>
        <taxon>Bos</taxon>
    </lineage>
</organism>
<dbReference type="EC" id="4.1.3.16" evidence="2"/>
<dbReference type="EMBL" id="BT026547">
    <property type="protein sequence ID" value="ABH06334.1"/>
    <property type="molecule type" value="mRNA"/>
</dbReference>
<dbReference type="EMBL" id="BC119998">
    <property type="protein sequence ID" value="AAI19999.1"/>
    <property type="molecule type" value="mRNA"/>
</dbReference>
<dbReference type="RefSeq" id="NP_001068705.1">
    <property type="nucleotide sequence ID" value="NM_001075237.1"/>
</dbReference>
<dbReference type="RefSeq" id="XP_024841297.1">
    <property type="nucleotide sequence ID" value="XM_024985529.2"/>
</dbReference>
<dbReference type="SMR" id="Q0P5I5"/>
<dbReference type="FunCoup" id="Q0P5I5">
    <property type="interactions" value="267"/>
</dbReference>
<dbReference type="STRING" id="9913.ENSBTAP00000060890"/>
<dbReference type="PaxDb" id="9913-ENSBTAP00000016909"/>
<dbReference type="Ensembl" id="ENSBTAT00000016909.6">
    <property type="protein sequence ID" value="ENSBTAP00000016909.4"/>
    <property type="gene ID" value="ENSBTAG00000012721.6"/>
</dbReference>
<dbReference type="GeneID" id="506001"/>
<dbReference type="KEGG" id="bta:506001"/>
<dbReference type="CTD" id="112817"/>
<dbReference type="VEuPathDB" id="HostDB:ENSBTAG00000012721"/>
<dbReference type="VGNC" id="VGNC:29900">
    <property type="gene designation" value="HOGA1"/>
</dbReference>
<dbReference type="eggNOG" id="ENOG502QWNS">
    <property type="taxonomic scope" value="Eukaryota"/>
</dbReference>
<dbReference type="GeneTree" id="ENSGT00530000063604"/>
<dbReference type="HOGENOM" id="CLU_049343_0_1_1"/>
<dbReference type="InParanoid" id="Q0P5I5"/>
<dbReference type="OMA" id="GMDACVP"/>
<dbReference type="OrthoDB" id="191315at2759"/>
<dbReference type="TreeFam" id="TF324600"/>
<dbReference type="BRENDA" id="4.1.3.16">
    <property type="organism ID" value="908"/>
</dbReference>
<dbReference type="Reactome" id="R-BTA-389661">
    <property type="pathway name" value="Glyoxylate metabolism and glycine degradation"/>
</dbReference>
<dbReference type="SABIO-RK" id="Q0P5I5"/>
<dbReference type="Proteomes" id="UP000009136">
    <property type="component" value="Chromosome 26"/>
</dbReference>
<dbReference type="Bgee" id="ENSBTAG00000012721">
    <property type="expression patterns" value="Expressed in cortex of kidney and 86 other cell types or tissues"/>
</dbReference>
<dbReference type="GO" id="GO:0005739">
    <property type="term" value="C:mitochondrion"/>
    <property type="evidence" value="ECO:0000314"/>
    <property type="project" value="BHF-UCL"/>
</dbReference>
<dbReference type="GO" id="GO:0106009">
    <property type="term" value="F:(4S)-4-hydroxy-2-oxoglutarate aldolase activity"/>
    <property type="evidence" value="ECO:0007669"/>
    <property type="project" value="RHEA"/>
</dbReference>
<dbReference type="GO" id="GO:0008700">
    <property type="term" value="F:(R,S)-4-hydroxy-2-oxoglutarate aldolase activity"/>
    <property type="evidence" value="ECO:0000314"/>
    <property type="project" value="UniProtKB"/>
</dbReference>
<dbReference type="GO" id="GO:0009436">
    <property type="term" value="P:glyoxylate catabolic process"/>
    <property type="evidence" value="ECO:0000314"/>
    <property type="project" value="UniProtKB"/>
</dbReference>
<dbReference type="CDD" id="cd00408">
    <property type="entry name" value="DHDPS-like"/>
    <property type="match status" value="1"/>
</dbReference>
<dbReference type="FunFam" id="3.20.20.70:FF:000153">
    <property type="entry name" value="4-hydroxy-2-oxoglutarate aldolase, mitochondrial isoform X1"/>
    <property type="match status" value="1"/>
</dbReference>
<dbReference type="Gene3D" id="3.20.20.70">
    <property type="entry name" value="Aldolase class I"/>
    <property type="match status" value="1"/>
</dbReference>
<dbReference type="InterPro" id="IPR013785">
    <property type="entry name" value="Aldolase_TIM"/>
</dbReference>
<dbReference type="InterPro" id="IPR002220">
    <property type="entry name" value="DapA-like"/>
</dbReference>
<dbReference type="InterPro" id="IPR020625">
    <property type="entry name" value="Schiff_base-form_aldolases_AS"/>
</dbReference>
<dbReference type="PANTHER" id="PTHR12128:SF66">
    <property type="entry name" value="4-HYDROXY-2-OXOGLUTARATE ALDOLASE, MITOCHONDRIAL"/>
    <property type="match status" value="1"/>
</dbReference>
<dbReference type="PANTHER" id="PTHR12128">
    <property type="entry name" value="DIHYDRODIPICOLINATE SYNTHASE"/>
    <property type="match status" value="1"/>
</dbReference>
<dbReference type="Pfam" id="PF00701">
    <property type="entry name" value="DHDPS"/>
    <property type="match status" value="1"/>
</dbReference>
<dbReference type="PIRSF" id="PIRSF001365">
    <property type="entry name" value="DHDPS"/>
    <property type="match status" value="1"/>
</dbReference>
<dbReference type="PRINTS" id="PR00146">
    <property type="entry name" value="DHPICSNTHASE"/>
</dbReference>
<dbReference type="SMART" id="SM01130">
    <property type="entry name" value="DHDPS"/>
    <property type="match status" value="1"/>
</dbReference>
<dbReference type="SUPFAM" id="SSF51569">
    <property type="entry name" value="Aldolase"/>
    <property type="match status" value="1"/>
</dbReference>
<dbReference type="PROSITE" id="PS00666">
    <property type="entry name" value="DHDPS_2"/>
    <property type="match status" value="1"/>
</dbReference>
<keyword id="KW-0903">Direct protein sequencing</keyword>
<keyword id="KW-0456">Lyase</keyword>
<keyword id="KW-0496">Mitochondrion</keyword>
<keyword id="KW-1185">Reference proteome</keyword>
<keyword id="KW-0704">Schiff base</keyword>
<keyword id="KW-0809">Transit peptide</keyword>
<protein>
    <recommendedName>
        <fullName>4-hydroxy-2-oxoglutarate aldolase, mitochondrial</fullName>
        <ecNumber evidence="2">4.1.3.16</ecNumber>
    </recommendedName>
    <alternativeName>
        <fullName>Dihydrodipicolinate synthase-like</fullName>
        <shortName>DHDPS-like protein</shortName>
    </alternativeName>
    <alternativeName>
        <fullName>Probable 2-keto-4-hydroxyglutarate aldolase</fullName>
        <shortName>Probable KHG-aldolase</shortName>
    </alternativeName>
</protein>
<gene>
    <name type="primary">HOGA1</name>
    <name type="synonym">DHDPSL</name>
</gene>
<accession>Q0P5I5</accession>
<accession>Q0V7M3</accession>
<evidence type="ECO:0000250" key="1"/>
<evidence type="ECO:0000269" key="2">
    <source>
    </source>
</evidence>
<evidence type="ECO:0000269" key="3">
    <source>
    </source>
</evidence>
<evidence type="ECO:0000305" key="4"/>
<sequence>MLVPRVWSSVRLGLSRVLSRTLRGWPSGEGRGMDLSGIYPPVTTPFTATAEVDYGKLEENLHKLGTLPFRGFVVQGSNGEFPFLTSSERLEVVSRARQALPKDKLLLAGSGCESTQATVEMTVSMAQVGADAAMVVTPCYYRGRMSSAALIHHYTKVADLSPVPVVLYSVPANTGLDLPVDAVVTLSQHPNIVGIKDSGGDVTRIGLIVHKTRSQDFQVLAGSAGFLLASYAIGAVGGVCALANVLGSQVCQLERLCLTGQWEDAQKLQHRLIEPNTAVTRRFGIPGLKKTMDWFGYYGGPCRSPLQELSPAQEEALRLDFASNGWL</sequence>
<comment type="function">
    <text evidence="1">Catalyzes the final step in the metabolic pathway of hydroxyproline.</text>
</comment>
<comment type="catalytic activity">
    <reaction evidence="2">
        <text>(4S)-4-hydroxy-2-oxoglutarate = glyoxylate + pyruvate</text>
        <dbReference type="Rhea" id="RHEA:35639"/>
        <dbReference type="ChEBI" id="CHEBI:15361"/>
        <dbReference type="ChEBI" id="CHEBI:36655"/>
        <dbReference type="ChEBI" id="CHEBI:71685"/>
        <dbReference type="EC" id="4.1.3.16"/>
    </reaction>
</comment>
<comment type="catalytic activity">
    <reaction evidence="2">
        <text>(4R)-4-hydroxy-2-oxoglutarate = glyoxylate + pyruvate</text>
        <dbReference type="Rhea" id="RHEA:30687"/>
        <dbReference type="ChEBI" id="CHEBI:15361"/>
        <dbReference type="ChEBI" id="CHEBI:36655"/>
        <dbReference type="ChEBI" id="CHEBI:62213"/>
        <dbReference type="EC" id="4.1.3.16"/>
    </reaction>
</comment>
<comment type="activity regulation">
    <text>Inhibited by divalent cations.</text>
</comment>
<comment type="biophysicochemical properties">
    <kinetics>
        <KM evidence="2">26 uM for DL-4-hydroxy-2-oxoglutarate</KM>
        <Vmax evidence="2">10.7 umol/min/mg enzyme</Vmax>
    </kinetics>
    <phDependence>
        <text evidence="2">Optimum pH is 8.8.</text>
    </phDependence>
</comment>
<comment type="subunit">
    <text evidence="2">Homotetramer.</text>
</comment>
<comment type="subcellular location">
    <subcellularLocation>
        <location evidence="3">Mitochondrion</location>
    </subcellularLocation>
</comment>
<comment type="similarity">
    <text evidence="4">Belongs to the DapA family.</text>
</comment>
<reference key="1">
    <citation type="journal article" date="2005" name="BMC Genomics">
        <title>Characterization of 954 bovine full-CDS cDNA sequences.</title>
        <authorList>
            <person name="Harhay G.P."/>
            <person name="Sonstegard T.S."/>
            <person name="Keele J.W."/>
            <person name="Heaton M.P."/>
            <person name="Clawson M.L."/>
            <person name="Snelling W.M."/>
            <person name="Wiedmann R.T."/>
            <person name="Van Tassell C.P."/>
            <person name="Smith T.P.L."/>
        </authorList>
    </citation>
    <scope>NUCLEOTIDE SEQUENCE [LARGE SCALE MRNA]</scope>
</reference>
<reference key="2">
    <citation type="submission" date="2006-08" db="EMBL/GenBank/DDBJ databases">
        <authorList>
            <consortium name="NIH - Mammalian Gene Collection (MGC) project"/>
        </authorList>
    </citation>
    <scope>NUCLEOTIDE SEQUENCE [LARGE SCALE MRNA]</scope>
    <source>
        <strain>Hereford</strain>
        <tissue>Fetal liver</tissue>
    </source>
</reference>
<reference key="3">
    <citation type="journal article" date="2011" name="PLoS ONE">
        <title>Structural and biochemical studies of human 4-hydroxy-2-oxoglutarate aldolase: implications for hydroxyproline metabolism in primary hyperoxaluria.</title>
        <authorList>
            <person name="Riedel T.J."/>
            <person name="Johnson L.C."/>
            <person name="Knight J."/>
            <person name="Hantgan R.R."/>
            <person name="Holmes R.P."/>
            <person name="Lowther W.T."/>
        </authorList>
    </citation>
    <scope>PROTEIN SEQUENCE OF 26-30</scope>
    <scope>TRANSIT PEPTIDE CLEAVAGE SITE</scope>
    <scope>SUBCELLULAR LOCATION</scope>
</reference>
<reference key="4">
    <citation type="journal article" date="1992" name="J. Biol. Chem.">
        <title>2-Keto-4-hydroxyglutarate aldolase: purification and characterization of the homogeneous enzyme from bovine kidney.</title>
        <authorList>
            <person name="Dekker E.E."/>
            <person name="Kitson R.P."/>
        </authorList>
    </citation>
    <scope>SUBUNIT</scope>
    <scope>CATALYTIC ACTIVITY</scope>
    <scope>BIOPHYSICOCHEMICAL PROPERTIES</scope>
</reference>
<reference key="5">
    <citation type="journal article" date="2010" name="Am. J. Hum. Genet.">
        <title>Mutations in DHDPSL are responsible for primary hyperoxaluria type III.</title>
        <authorList>
            <person name="Belostotsky R."/>
            <person name="Seboun E."/>
            <person name="Idelson G.H."/>
            <person name="Milliner D.S."/>
            <person name="Becker-Cohen R."/>
            <person name="Rinat C."/>
            <person name="Monico C.G."/>
            <person name="Feinstein S."/>
            <person name="Ben-Shalom E."/>
            <person name="Magen D."/>
            <person name="Weissman I."/>
            <person name="Charon C."/>
            <person name="Frishberg Y."/>
        </authorList>
    </citation>
    <scope>IDENTIFICATION</scope>
</reference>
<proteinExistence type="evidence at protein level"/>